<comment type="function">
    <text evidence="1">Hydrolyzes extracellular Ap3A into AMP and ADP, and Ap4A into AMP and ATP. Ap3A and Ap4A are diadenosine polyphosphates thought to induce proliferation of vascular smooth muscle cells. Acts as a procoagulant, mediating platelet aggregation at the site of nascent thrombus via release of ADP from Ap3A and activation of ADP receptors (By similarity).</text>
</comment>
<comment type="catalytic activity">
    <reaction>
        <text>P(1),P(3)-bis(5'-adenosyl) triphosphate + H2O = AMP + ADP + 2 H(+)</text>
        <dbReference type="Rhea" id="RHEA:13893"/>
        <dbReference type="ChEBI" id="CHEBI:15377"/>
        <dbReference type="ChEBI" id="CHEBI:15378"/>
        <dbReference type="ChEBI" id="CHEBI:58529"/>
        <dbReference type="ChEBI" id="CHEBI:456215"/>
        <dbReference type="ChEBI" id="CHEBI:456216"/>
        <dbReference type="EC" id="3.6.1.29"/>
    </reaction>
</comment>
<comment type="cofactor">
    <cofactor evidence="1">
        <name>Zn(2+)</name>
        <dbReference type="ChEBI" id="CHEBI:29105"/>
    </cofactor>
    <text evidence="1">Binds 2 Zn(2+) ions per subunit.</text>
</comment>
<comment type="subcellular location">
    <subcellularLocation>
        <location evidence="1">Cell membrane</location>
        <topology>Single-pass type I membrane protein</topology>
    </subcellularLocation>
</comment>
<comment type="similarity">
    <text evidence="3">Belongs to the nucleotide pyrophosphatase/phosphodiesterase family.</text>
</comment>
<keyword id="KW-0094">Blood coagulation</keyword>
<keyword id="KW-1003">Cell membrane</keyword>
<keyword id="KW-1015">Disulfide bond</keyword>
<keyword id="KW-0325">Glycoprotein</keyword>
<keyword id="KW-0356">Hemostasis</keyword>
<keyword id="KW-0378">Hydrolase</keyword>
<keyword id="KW-0472">Membrane</keyword>
<keyword id="KW-0479">Metal-binding</keyword>
<keyword id="KW-1185">Reference proteome</keyword>
<keyword id="KW-0732">Signal</keyword>
<keyword id="KW-0812">Transmembrane</keyword>
<keyword id="KW-1133">Transmembrane helix</keyword>
<keyword id="KW-0862">Zinc</keyword>
<protein>
    <recommendedName>
        <fullName>Bis(5'-adenosyl)-triphosphatase ENPP4</fullName>
        <ecNumber>3.6.1.29</ecNumber>
    </recommendedName>
    <alternativeName>
        <fullName>AP3A hydrolase</fullName>
        <shortName>AP3Aase</shortName>
    </alternativeName>
    <alternativeName>
        <fullName>Ectonucleotide pyrophosphatase/phosphodiesterase family member 4</fullName>
        <shortName>E-NPP 4</shortName>
        <shortName>NPP-4</shortName>
    </alternativeName>
</protein>
<reference key="1">
    <citation type="submission" date="2007-02" db="EMBL/GenBank/DDBJ databases">
        <authorList>
            <consortium name="NIH - Mammalian Gene Collection (MGC) project"/>
        </authorList>
    </citation>
    <scope>NUCLEOTIDE SEQUENCE [LARGE SCALE MRNA]</scope>
    <source>
        <strain>Hereford</strain>
        <tissue>Hypothalamus</tissue>
    </source>
</reference>
<organism>
    <name type="scientific">Bos taurus</name>
    <name type="common">Bovine</name>
    <dbReference type="NCBI Taxonomy" id="9913"/>
    <lineage>
        <taxon>Eukaryota</taxon>
        <taxon>Metazoa</taxon>
        <taxon>Chordata</taxon>
        <taxon>Craniata</taxon>
        <taxon>Vertebrata</taxon>
        <taxon>Euteleostomi</taxon>
        <taxon>Mammalia</taxon>
        <taxon>Eutheria</taxon>
        <taxon>Laurasiatheria</taxon>
        <taxon>Artiodactyla</taxon>
        <taxon>Ruminantia</taxon>
        <taxon>Pecora</taxon>
        <taxon>Bovidae</taxon>
        <taxon>Bovinae</taxon>
        <taxon>Bos</taxon>
    </lineage>
</organism>
<dbReference type="EC" id="3.6.1.29"/>
<dbReference type="EMBL" id="BC133338">
    <property type="protein sequence ID" value="AAI33339.1"/>
    <property type="molecule type" value="mRNA"/>
</dbReference>
<dbReference type="RefSeq" id="NP_001075004.1">
    <property type="nucleotide sequence ID" value="NM_001081535.1"/>
</dbReference>
<dbReference type="RefSeq" id="XP_005223523.1">
    <property type="nucleotide sequence ID" value="XM_005223466.5"/>
</dbReference>
<dbReference type="SMR" id="A2VDP5"/>
<dbReference type="FunCoup" id="A2VDP5">
    <property type="interactions" value="426"/>
</dbReference>
<dbReference type="STRING" id="9913.ENSBTAP00000004547"/>
<dbReference type="GlyCosmos" id="A2VDP5">
    <property type="glycosylation" value="2 sites, No reported glycans"/>
</dbReference>
<dbReference type="GlyGen" id="A2VDP5">
    <property type="glycosylation" value="2 sites"/>
</dbReference>
<dbReference type="PaxDb" id="9913-ENSBTAP00000004547"/>
<dbReference type="Ensembl" id="ENSBTAT00000004547.5">
    <property type="protein sequence ID" value="ENSBTAP00000004547.4"/>
    <property type="gene ID" value="ENSBTAG00000003499.5"/>
</dbReference>
<dbReference type="GeneID" id="538583"/>
<dbReference type="KEGG" id="bta:538583"/>
<dbReference type="CTD" id="22875"/>
<dbReference type="VEuPathDB" id="HostDB:ENSBTAG00000003499"/>
<dbReference type="VGNC" id="VGNC:49551">
    <property type="gene designation" value="ENPP4"/>
</dbReference>
<dbReference type="eggNOG" id="KOG2645">
    <property type="taxonomic scope" value="Eukaryota"/>
</dbReference>
<dbReference type="GeneTree" id="ENSGT00940000158831"/>
<dbReference type="HOGENOM" id="CLU_017594_1_2_1"/>
<dbReference type="InParanoid" id="A2VDP5"/>
<dbReference type="OMA" id="DVCIDHS"/>
<dbReference type="OrthoDB" id="415411at2759"/>
<dbReference type="TreeFam" id="TF330032"/>
<dbReference type="Reactome" id="R-BTA-6798695">
    <property type="pathway name" value="Neutrophil degranulation"/>
</dbReference>
<dbReference type="Proteomes" id="UP000009136">
    <property type="component" value="Chromosome 23"/>
</dbReference>
<dbReference type="Bgee" id="ENSBTAG00000003499">
    <property type="expression patterns" value="Expressed in oviduct epithelium and 103 other cell types or tissues"/>
</dbReference>
<dbReference type="GO" id="GO:0005886">
    <property type="term" value="C:plasma membrane"/>
    <property type="evidence" value="ECO:0007669"/>
    <property type="project" value="UniProtKB-SubCell"/>
</dbReference>
<dbReference type="GO" id="GO:0047710">
    <property type="term" value="F:bis(5'-adenosyl)-triphosphatase activity"/>
    <property type="evidence" value="ECO:0007669"/>
    <property type="project" value="UniProtKB-EC"/>
</dbReference>
<dbReference type="GO" id="GO:0046872">
    <property type="term" value="F:metal ion binding"/>
    <property type="evidence" value="ECO:0007669"/>
    <property type="project" value="UniProtKB-KW"/>
</dbReference>
<dbReference type="GO" id="GO:0007596">
    <property type="term" value="P:blood coagulation"/>
    <property type="evidence" value="ECO:0007669"/>
    <property type="project" value="UniProtKB-KW"/>
</dbReference>
<dbReference type="GO" id="GO:0030194">
    <property type="term" value="P:positive regulation of blood coagulation"/>
    <property type="evidence" value="ECO:0007669"/>
    <property type="project" value="Ensembl"/>
</dbReference>
<dbReference type="GO" id="GO:0046130">
    <property type="term" value="P:purine ribonucleoside catabolic process"/>
    <property type="evidence" value="ECO:0007669"/>
    <property type="project" value="Ensembl"/>
</dbReference>
<dbReference type="CDD" id="cd16018">
    <property type="entry name" value="Enpp"/>
    <property type="match status" value="1"/>
</dbReference>
<dbReference type="FunFam" id="3.40.720.10:FF:000035">
    <property type="entry name" value="Ectonucleotide pyrophosphatase/phosphodiesterase 4 (Putative)"/>
    <property type="match status" value="1"/>
</dbReference>
<dbReference type="FunFam" id="3.30.1360.180:FF:000004">
    <property type="entry name" value="Ectonucleotide pyrophosphatase/phosphodiesterase family member 4"/>
    <property type="match status" value="1"/>
</dbReference>
<dbReference type="Gene3D" id="3.30.1360.180">
    <property type="match status" value="1"/>
</dbReference>
<dbReference type="Gene3D" id="3.40.720.10">
    <property type="entry name" value="Alkaline Phosphatase, subunit A"/>
    <property type="match status" value="1"/>
</dbReference>
<dbReference type="InterPro" id="IPR017850">
    <property type="entry name" value="Alkaline_phosphatase_core_sf"/>
</dbReference>
<dbReference type="InterPro" id="IPR002591">
    <property type="entry name" value="Phosphodiest/P_Trfase"/>
</dbReference>
<dbReference type="PANTHER" id="PTHR10151:SF79">
    <property type="entry name" value="BIS(5'-ADENOSYL)-TRIPHOSPHATASE ENPP4"/>
    <property type="match status" value="1"/>
</dbReference>
<dbReference type="PANTHER" id="PTHR10151">
    <property type="entry name" value="ECTONUCLEOTIDE PYROPHOSPHATASE/PHOSPHODIESTERASE"/>
    <property type="match status" value="1"/>
</dbReference>
<dbReference type="Pfam" id="PF01663">
    <property type="entry name" value="Phosphodiest"/>
    <property type="match status" value="1"/>
</dbReference>
<dbReference type="SUPFAM" id="SSF53649">
    <property type="entry name" value="Alkaline phosphatase-like"/>
    <property type="match status" value="1"/>
</dbReference>
<accession>A2VDP5</accession>
<sequence length="453" mass="51165">MKLLLMLLFSGLMTGCRGNSSSASPPKLLLVSFDGFRADYLQNYEFPHLQNFIKEGVLVEQVKNVFITKTFPNHYSIVTGLYEESHGIVANSMYDVNTKKHFSDHNDKDPFWWNEAVPIWVTNQLQDNRSSAAAMWPGTDVPIHNSTPSYFMNYSPSVSFRERLGNVTTWLSSSNPPVTFATLYWEEPDASGHKYGPEDKENMRRVLEEIDEHIGELVHRLKVLGLWESLNVIITSDHGMTQCSKDRVINLDGCLDPSYYTLIDLTPVAAILPKINKTKVYSKLKVCDPHMNVYLKEDIPARFHYQHSDRIQPIILVADEGWTIVLNKSSLKLGDHGYDNSLPSMNPFLAAHGPAFHKGYKHSSINTVDIYPMMCHILGLKPHPNNGTFGHTKCLLVDQWCINLPEAIGIVIGALLVLTTLTCLIIIMQNRVSGPRPFSRLQLQEDDDDPLIG</sequence>
<proteinExistence type="evidence at transcript level"/>
<gene>
    <name type="primary">ENPP4</name>
</gene>
<name>ENPP4_BOVIN</name>
<feature type="signal peptide" evidence="2">
    <location>
        <begin position="1"/>
        <end position="18"/>
    </location>
</feature>
<feature type="chain" id="PRO_0000324794" description="Bis(5'-adenosyl)-triphosphatase ENPP4">
    <location>
        <begin position="19"/>
        <end position="453"/>
    </location>
</feature>
<feature type="topological domain" description="Extracellular" evidence="2">
    <location>
        <begin position="19"/>
        <end position="407"/>
    </location>
</feature>
<feature type="transmembrane region" description="Helical" evidence="2">
    <location>
        <begin position="408"/>
        <end position="428"/>
    </location>
</feature>
<feature type="topological domain" description="Cytoplasmic" evidence="2">
    <location>
        <begin position="429"/>
        <end position="453"/>
    </location>
</feature>
<feature type="active site" description="AMP-threonine intermediate" evidence="1">
    <location>
        <position position="70"/>
    </location>
</feature>
<feature type="binding site" evidence="1">
    <location>
        <position position="34"/>
    </location>
    <ligand>
        <name>Zn(2+)</name>
        <dbReference type="ChEBI" id="CHEBI:29105"/>
        <label>1</label>
        <note>catalytic</note>
    </ligand>
</feature>
<feature type="binding site" evidence="1">
    <location>
        <position position="70"/>
    </location>
    <ligand>
        <name>Zn(2+)</name>
        <dbReference type="ChEBI" id="CHEBI:29105"/>
        <label>1</label>
        <note>catalytic</note>
    </ligand>
</feature>
<feature type="binding site" evidence="1">
    <location>
        <position position="91"/>
    </location>
    <ligand>
        <name>substrate</name>
    </ligand>
</feature>
<feature type="binding site" evidence="1">
    <location>
        <position position="154"/>
    </location>
    <ligand>
        <name>substrate</name>
    </ligand>
</feature>
<feature type="binding site" evidence="1">
    <location>
        <position position="189"/>
    </location>
    <ligand>
        <name>substrate</name>
    </ligand>
</feature>
<feature type="binding site" evidence="1">
    <location>
        <position position="189"/>
    </location>
    <ligand>
        <name>Zn(2+)</name>
        <dbReference type="ChEBI" id="CHEBI:29105"/>
        <label>2</label>
        <note>catalytic</note>
    </ligand>
</feature>
<feature type="binding site" evidence="1">
    <location>
        <position position="193"/>
    </location>
    <ligand>
        <name>Zn(2+)</name>
        <dbReference type="ChEBI" id="CHEBI:29105"/>
        <label>2</label>
        <note>catalytic</note>
    </ligand>
</feature>
<feature type="binding site" evidence="1">
    <location>
        <position position="237"/>
    </location>
    <ligand>
        <name>Zn(2+)</name>
        <dbReference type="ChEBI" id="CHEBI:29105"/>
        <label>1</label>
        <note>catalytic</note>
    </ligand>
</feature>
<feature type="binding site" evidence="1">
    <location>
        <position position="238"/>
    </location>
    <ligand>
        <name>Zn(2+)</name>
        <dbReference type="ChEBI" id="CHEBI:29105"/>
        <label>1</label>
        <note>catalytic</note>
    </ligand>
</feature>
<feature type="binding site" evidence="1">
    <location>
        <position position="336"/>
    </location>
    <ligand>
        <name>Zn(2+)</name>
        <dbReference type="ChEBI" id="CHEBI:29105"/>
        <label>2</label>
        <note>catalytic</note>
    </ligand>
</feature>
<feature type="glycosylation site" description="N-linked (GlcNAc...) asparagine" evidence="2">
    <location>
        <position position="166"/>
    </location>
</feature>
<feature type="glycosylation site" description="N-linked (GlcNAc...) asparagine" evidence="2">
    <location>
        <position position="276"/>
    </location>
</feature>
<feature type="disulfide bond" evidence="1">
    <location>
        <begin position="254"/>
        <end position="287"/>
    </location>
</feature>
<feature type="disulfide bond" evidence="1">
    <location>
        <begin position="394"/>
        <end position="401"/>
    </location>
</feature>
<evidence type="ECO:0000250" key="1"/>
<evidence type="ECO:0000255" key="2"/>
<evidence type="ECO:0000305" key="3"/>